<dbReference type="EC" id="2.6.1.13" evidence="1"/>
<dbReference type="EMBL" id="CP000029">
    <property type="protein sequence ID" value="AAW53916.1"/>
    <property type="molecule type" value="Genomic_DNA"/>
</dbReference>
<dbReference type="RefSeq" id="WP_002467857.1">
    <property type="nucleotide sequence ID" value="NC_002976.3"/>
</dbReference>
<dbReference type="SMR" id="Q5HQK4"/>
<dbReference type="STRING" id="176279.SERP0545"/>
<dbReference type="KEGG" id="ser:SERP0545"/>
<dbReference type="eggNOG" id="COG4992">
    <property type="taxonomic scope" value="Bacteria"/>
</dbReference>
<dbReference type="HOGENOM" id="CLU_016922_10_1_9"/>
<dbReference type="UniPathway" id="UPA00098">
    <property type="reaction ID" value="UER00358"/>
</dbReference>
<dbReference type="Proteomes" id="UP000000531">
    <property type="component" value="Chromosome"/>
</dbReference>
<dbReference type="GO" id="GO:0005737">
    <property type="term" value="C:cytoplasm"/>
    <property type="evidence" value="ECO:0007669"/>
    <property type="project" value="UniProtKB-SubCell"/>
</dbReference>
<dbReference type="GO" id="GO:0042802">
    <property type="term" value="F:identical protein binding"/>
    <property type="evidence" value="ECO:0007669"/>
    <property type="project" value="TreeGrafter"/>
</dbReference>
<dbReference type="GO" id="GO:0004587">
    <property type="term" value="F:ornithine aminotransferase activity"/>
    <property type="evidence" value="ECO:0007669"/>
    <property type="project" value="UniProtKB-UniRule"/>
</dbReference>
<dbReference type="GO" id="GO:0030170">
    <property type="term" value="F:pyridoxal phosphate binding"/>
    <property type="evidence" value="ECO:0007669"/>
    <property type="project" value="UniProtKB-UniRule"/>
</dbReference>
<dbReference type="GO" id="GO:0055129">
    <property type="term" value="P:L-proline biosynthetic process"/>
    <property type="evidence" value="ECO:0007669"/>
    <property type="project" value="UniProtKB-UniRule"/>
</dbReference>
<dbReference type="CDD" id="cd00610">
    <property type="entry name" value="OAT_like"/>
    <property type="match status" value="1"/>
</dbReference>
<dbReference type="FunFam" id="3.40.640.10:FF:000011">
    <property type="entry name" value="Ornithine aminotransferase"/>
    <property type="match status" value="1"/>
</dbReference>
<dbReference type="Gene3D" id="3.90.1150.10">
    <property type="entry name" value="Aspartate Aminotransferase, domain 1"/>
    <property type="match status" value="1"/>
</dbReference>
<dbReference type="Gene3D" id="3.40.640.10">
    <property type="entry name" value="Type I PLP-dependent aspartate aminotransferase-like (Major domain)"/>
    <property type="match status" value="1"/>
</dbReference>
<dbReference type="HAMAP" id="MF_01689">
    <property type="entry name" value="Ornith_aminotrans_3"/>
    <property type="match status" value="1"/>
</dbReference>
<dbReference type="InterPro" id="IPR005814">
    <property type="entry name" value="Aminotrans_3"/>
</dbReference>
<dbReference type="InterPro" id="IPR049704">
    <property type="entry name" value="Aminotrans_3_PPA_site"/>
</dbReference>
<dbReference type="InterPro" id="IPR050103">
    <property type="entry name" value="Class-III_PLP-dep_AT"/>
</dbReference>
<dbReference type="InterPro" id="IPR010164">
    <property type="entry name" value="Orn_aminotrans"/>
</dbReference>
<dbReference type="InterPro" id="IPR034757">
    <property type="entry name" value="Ornith_aminotrans_bact"/>
</dbReference>
<dbReference type="InterPro" id="IPR015424">
    <property type="entry name" value="PyrdxlP-dep_Trfase"/>
</dbReference>
<dbReference type="InterPro" id="IPR015421">
    <property type="entry name" value="PyrdxlP-dep_Trfase_major"/>
</dbReference>
<dbReference type="InterPro" id="IPR015422">
    <property type="entry name" value="PyrdxlP-dep_Trfase_small"/>
</dbReference>
<dbReference type="NCBIfam" id="TIGR01885">
    <property type="entry name" value="Orn_aminotrans"/>
    <property type="match status" value="1"/>
</dbReference>
<dbReference type="NCBIfam" id="NF002325">
    <property type="entry name" value="PRK01278.1"/>
    <property type="match status" value="1"/>
</dbReference>
<dbReference type="NCBIfam" id="NF003145">
    <property type="entry name" value="PRK04073.1"/>
    <property type="match status" value="1"/>
</dbReference>
<dbReference type="PANTHER" id="PTHR11986">
    <property type="entry name" value="AMINOTRANSFERASE CLASS III"/>
    <property type="match status" value="1"/>
</dbReference>
<dbReference type="PANTHER" id="PTHR11986:SF18">
    <property type="entry name" value="ORNITHINE AMINOTRANSFERASE, MITOCHONDRIAL"/>
    <property type="match status" value="1"/>
</dbReference>
<dbReference type="Pfam" id="PF00202">
    <property type="entry name" value="Aminotran_3"/>
    <property type="match status" value="1"/>
</dbReference>
<dbReference type="PIRSF" id="PIRSF000521">
    <property type="entry name" value="Transaminase_4ab_Lys_Orn"/>
    <property type="match status" value="1"/>
</dbReference>
<dbReference type="SUPFAM" id="SSF53383">
    <property type="entry name" value="PLP-dependent transferases"/>
    <property type="match status" value="1"/>
</dbReference>
<dbReference type="PROSITE" id="PS00600">
    <property type="entry name" value="AA_TRANSFER_CLASS_3"/>
    <property type="match status" value="1"/>
</dbReference>
<sequence length="396" mass="43443">MTQSEKIINLTNHYGAHNYVPLPIVISEAEGVWVKDPEGNTYMDMLSAYSAVNQGHRHPRIIQALKDQADKVTLVSRAFHSDNLGQWYEKICKLAGKDKALPMNTGAEAVETALKAARRWAYDVKGIEPNKAEIIAFNGNFHGRTMAPVSLSSEAEYQRGYGPLLDGFRKVEFGDVNQLKAAINKNTAAILVEPIQGEAGINVPPEGYLKTIRELCDEHQILFIADEIQAGLGRSGKLFATDWDHVKPDVYILGKALGGGVFPISVVLADNEVLDVFTPGSHGSTFGGNPLASAVSIAAIDVIIDEDLPGRSLELGEYFKSELKKIEHPSIKEVRGRGLFIGIELHESARPYCEALKEQGLLCKETHDTVIRFAPPLVITKEELDMALEKIKSVFA</sequence>
<organism>
    <name type="scientific">Staphylococcus epidermidis (strain ATCC 35984 / DSM 28319 / BCRC 17069 / CCUG 31568 / BM 3577 / RP62A)</name>
    <dbReference type="NCBI Taxonomy" id="176279"/>
    <lineage>
        <taxon>Bacteria</taxon>
        <taxon>Bacillati</taxon>
        <taxon>Bacillota</taxon>
        <taxon>Bacilli</taxon>
        <taxon>Bacillales</taxon>
        <taxon>Staphylococcaceae</taxon>
        <taxon>Staphylococcus</taxon>
    </lineage>
</organism>
<feature type="chain" id="PRO_0000112794" description="Ornithine aminotransferase">
    <location>
        <begin position="1"/>
        <end position="396"/>
    </location>
</feature>
<feature type="modified residue" description="N6-(pyridoxal phosphate)lysine" evidence="1">
    <location>
        <position position="255"/>
    </location>
</feature>
<protein>
    <recommendedName>
        <fullName evidence="1">Ornithine aminotransferase</fullName>
        <shortName evidence="1">OAT</shortName>
        <ecNumber evidence="1">2.6.1.13</ecNumber>
    </recommendedName>
    <alternativeName>
        <fullName evidence="1">Ornithine--oxo-acid aminotransferase</fullName>
    </alternativeName>
</protein>
<keyword id="KW-0028">Amino-acid biosynthesis</keyword>
<keyword id="KW-0032">Aminotransferase</keyword>
<keyword id="KW-0963">Cytoplasm</keyword>
<keyword id="KW-0641">Proline biosynthesis</keyword>
<keyword id="KW-0663">Pyridoxal phosphate</keyword>
<keyword id="KW-1185">Reference proteome</keyword>
<keyword id="KW-0808">Transferase</keyword>
<comment type="function">
    <text evidence="1">Catalyzes the interconversion of ornithine to glutamate semialdehyde.</text>
</comment>
<comment type="catalytic activity">
    <reaction evidence="1">
        <text>a 2-oxocarboxylate + L-ornithine = L-glutamate 5-semialdehyde + an L-alpha-amino acid</text>
        <dbReference type="Rhea" id="RHEA:13877"/>
        <dbReference type="ChEBI" id="CHEBI:35179"/>
        <dbReference type="ChEBI" id="CHEBI:46911"/>
        <dbReference type="ChEBI" id="CHEBI:58066"/>
        <dbReference type="ChEBI" id="CHEBI:59869"/>
        <dbReference type="EC" id="2.6.1.13"/>
    </reaction>
</comment>
<comment type="cofactor">
    <cofactor evidence="1">
        <name>pyridoxal 5'-phosphate</name>
        <dbReference type="ChEBI" id="CHEBI:597326"/>
    </cofactor>
</comment>
<comment type="pathway">
    <text evidence="1">Amino-acid biosynthesis; L-proline biosynthesis; L-glutamate 5-semialdehyde from L-ornithine: step 1/1.</text>
</comment>
<comment type="subcellular location">
    <subcellularLocation>
        <location evidence="1">Cytoplasm</location>
    </subcellularLocation>
</comment>
<comment type="similarity">
    <text evidence="1">Belongs to the class-III pyridoxal-phosphate-dependent aminotransferase family. OAT subfamily.</text>
</comment>
<proteinExistence type="inferred from homology"/>
<accession>Q5HQK4</accession>
<evidence type="ECO:0000255" key="1">
    <source>
        <dbReference type="HAMAP-Rule" id="MF_01689"/>
    </source>
</evidence>
<name>OAT_STAEQ</name>
<reference key="1">
    <citation type="journal article" date="2005" name="J. Bacteriol.">
        <title>Insights on evolution of virulence and resistance from the complete genome analysis of an early methicillin-resistant Staphylococcus aureus strain and a biofilm-producing methicillin-resistant Staphylococcus epidermidis strain.</title>
        <authorList>
            <person name="Gill S.R."/>
            <person name="Fouts D.E."/>
            <person name="Archer G.L."/>
            <person name="Mongodin E.F."/>
            <person name="DeBoy R.T."/>
            <person name="Ravel J."/>
            <person name="Paulsen I.T."/>
            <person name="Kolonay J.F."/>
            <person name="Brinkac L.M."/>
            <person name="Beanan M.J."/>
            <person name="Dodson R.J."/>
            <person name="Daugherty S.C."/>
            <person name="Madupu R."/>
            <person name="Angiuoli S.V."/>
            <person name="Durkin A.S."/>
            <person name="Haft D.H."/>
            <person name="Vamathevan J.J."/>
            <person name="Khouri H."/>
            <person name="Utterback T.R."/>
            <person name="Lee C."/>
            <person name="Dimitrov G."/>
            <person name="Jiang L."/>
            <person name="Qin H."/>
            <person name="Weidman J."/>
            <person name="Tran K."/>
            <person name="Kang K.H."/>
            <person name="Hance I.R."/>
            <person name="Nelson K.E."/>
            <person name="Fraser C.M."/>
        </authorList>
    </citation>
    <scope>NUCLEOTIDE SEQUENCE [LARGE SCALE GENOMIC DNA]</scope>
    <source>
        <strain>ATCC 35984 / DSM 28319 / BCRC 17069 / CCUG 31568 / BM 3577 / RP62A</strain>
    </source>
</reference>
<gene>
    <name evidence="1" type="primary">rocD</name>
    <name type="ordered locus">SERP0545</name>
</gene>